<keyword id="KW-0004">4Fe-4S</keyword>
<keyword id="KW-0963">Cytoplasm</keyword>
<keyword id="KW-0408">Iron</keyword>
<keyword id="KW-0411">Iron-sulfur</keyword>
<keyword id="KW-0479">Metal-binding</keyword>
<keyword id="KW-1185">Reference proteome</keyword>
<keyword id="KW-0949">S-adenosyl-L-methionine</keyword>
<keyword id="KW-0808">Transferase</keyword>
<keyword id="KW-0819">tRNA processing</keyword>
<dbReference type="EC" id="2.8.4.3" evidence="1"/>
<dbReference type="EMBL" id="CR954246">
    <property type="protein sequence ID" value="CAI86124.1"/>
    <property type="status" value="ALT_INIT"/>
    <property type="molecule type" value="Genomic_DNA"/>
</dbReference>
<dbReference type="SMR" id="Q3IK75"/>
<dbReference type="STRING" id="326442.PSHAa1046"/>
<dbReference type="KEGG" id="pha:PSHAa1046"/>
<dbReference type="PATRIC" id="fig|326442.8.peg.1006"/>
<dbReference type="eggNOG" id="COG0621">
    <property type="taxonomic scope" value="Bacteria"/>
</dbReference>
<dbReference type="HOGENOM" id="CLU_018697_2_0_6"/>
<dbReference type="BioCyc" id="PHAL326442:PSHA_RS05115-MONOMER"/>
<dbReference type="Proteomes" id="UP000006843">
    <property type="component" value="Chromosome I"/>
</dbReference>
<dbReference type="GO" id="GO:0005829">
    <property type="term" value="C:cytosol"/>
    <property type="evidence" value="ECO:0007669"/>
    <property type="project" value="TreeGrafter"/>
</dbReference>
<dbReference type="GO" id="GO:0051539">
    <property type="term" value="F:4 iron, 4 sulfur cluster binding"/>
    <property type="evidence" value="ECO:0007669"/>
    <property type="project" value="UniProtKB-UniRule"/>
</dbReference>
<dbReference type="GO" id="GO:0046872">
    <property type="term" value="F:metal ion binding"/>
    <property type="evidence" value="ECO:0007669"/>
    <property type="project" value="UniProtKB-KW"/>
</dbReference>
<dbReference type="GO" id="GO:0035597">
    <property type="term" value="F:N6-isopentenyladenosine methylthiotransferase activity"/>
    <property type="evidence" value="ECO:0007669"/>
    <property type="project" value="TreeGrafter"/>
</dbReference>
<dbReference type="CDD" id="cd01335">
    <property type="entry name" value="Radical_SAM"/>
    <property type="match status" value="1"/>
</dbReference>
<dbReference type="FunFam" id="3.40.50.12160:FF:000001">
    <property type="entry name" value="tRNA-2-methylthio-N(6)-dimethylallyladenosine synthase"/>
    <property type="match status" value="1"/>
</dbReference>
<dbReference type="FunFam" id="3.80.30.20:FF:000001">
    <property type="entry name" value="tRNA-2-methylthio-N(6)-dimethylallyladenosine synthase 2"/>
    <property type="match status" value="1"/>
</dbReference>
<dbReference type="Gene3D" id="3.40.50.12160">
    <property type="entry name" value="Methylthiotransferase, N-terminal domain"/>
    <property type="match status" value="1"/>
</dbReference>
<dbReference type="Gene3D" id="3.80.30.20">
    <property type="entry name" value="tm_1862 like domain"/>
    <property type="match status" value="1"/>
</dbReference>
<dbReference type="HAMAP" id="MF_01864">
    <property type="entry name" value="tRNA_metthiotr_MiaB"/>
    <property type="match status" value="1"/>
</dbReference>
<dbReference type="InterPro" id="IPR006638">
    <property type="entry name" value="Elp3/MiaA/NifB-like_rSAM"/>
</dbReference>
<dbReference type="InterPro" id="IPR005839">
    <property type="entry name" value="Methylthiotransferase"/>
</dbReference>
<dbReference type="InterPro" id="IPR020612">
    <property type="entry name" value="Methylthiotransferase_CS"/>
</dbReference>
<dbReference type="InterPro" id="IPR013848">
    <property type="entry name" value="Methylthiotransferase_N"/>
</dbReference>
<dbReference type="InterPro" id="IPR038135">
    <property type="entry name" value="Methylthiotransferase_N_sf"/>
</dbReference>
<dbReference type="InterPro" id="IPR006463">
    <property type="entry name" value="MiaB_methiolase"/>
</dbReference>
<dbReference type="InterPro" id="IPR007197">
    <property type="entry name" value="rSAM"/>
</dbReference>
<dbReference type="InterPro" id="IPR023404">
    <property type="entry name" value="rSAM_horseshoe"/>
</dbReference>
<dbReference type="InterPro" id="IPR002792">
    <property type="entry name" value="TRAM_dom"/>
</dbReference>
<dbReference type="NCBIfam" id="TIGR01574">
    <property type="entry name" value="miaB-methiolase"/>
    <property type="match status" value="1"/>
</dbReference>
<dbReference type="NCBIfam" id="TIGR00089">
    <property type="entry name" value="MiaB/RimO family radical SAM methylthiotransferase"/>
    <property type="match status" value="1"/>
</dbReference>
<dbReference type="PANTHER" id="PTHR43020">
    <property type="entry name" value="CDK5 REGULATORY SUBUNIT-ASSOCIATED PROTEIN 1"/>
    <property type="match status" value="1"/>
</dbReference>
<dbReference type="PANTHER" id="PTHR43020:SF2">
    <property type="entry name" value="MITOCHONDRIAL TRNA METHYLTHIOTRANSFERASE CDK5RAP1"/>
    <property type="match status" value="1"/>
</dbReference>
<dbReference type="Pfam" id="PF04055">
    <property type="entry name" value="Radical_SAM"/>
    <property type="match status" value="1"/>
</dbReference>
<dbReference type="Pfam" id="PF01938">
    <property type="entry name" value="TRAM"/>
    <property type="match status" value="1"/>
</dbReference>
<dbReference type="Pfam" id="PF00919">
    <property type="entry name" value="UPF0004"/>
    <property type="match status" value="1"/>
</dbReference>
<dbReference type="SFLD" id="SFLDF00273">
    <property type="entry name" value="(dimethylallyl)adenosine_tRNA"/>
    <property type="match status" value="1"/>
</dbReference>
<dbReference type="SFLD" id="SFLDG01082">
    <property type="entry name" value="B12-binding_domain_containing"/>
    <property type="match status" value="1"/>
</dbReference>
<dbReference type="SFLD" id="SFLDG01061">
    <property type="entry name" value="methylthiotransferase"/>
    <property type="match status" value="1"/>
</dbReference>
<dbReference type="SMART" id="SM00729">
    <property type="entry name" value="Elp3"/>
    <property type="match status" value="1"/>
</dbReference>
<dbReference type="SUPFAM" id="SSF102114">
    <property type="entry name" value="Radical SAM enzymes"/>
    <property type="match status" value="1"/>
</dbReference>
<dbReference type="PROSITE" id="PS51449">
    <property type="entry name" value="MTTASE_N"/>
    <property type="match status" value="1"/>
</dbReference>
<dbReference type="PROSITE" id="PS01278">
    <property type="entry name" value="MTTASE_RADICAL"/>
    <property type="match status" value="1"/>
</dbReference>
<dbReference type="PROSITE" id="PS51918">
    <property type="entry name" value="RADICAL_SAM"/>
    <property type="match status" value="1"/>
</dbReference>
<dbReference type="PROSITE" id="PS50926">
    <property type="entry name" value="TRAM"/>
    <property type="match status" value="1"/>
</dbReference>
<sequence>MSKKLHIKTWGCQMNEYDSQKMAELLDATNGYQLTDDATDADVILLNTCSIREKAQEKVFHQLGRWKLLKDDKPDLIIGVGGCVASQEGDSIRQRAPFVDVIFGPQTLHRLPEMIKQVQGDKGSSVVDISFPEIEKFDRLPEPKADGPSAFVSIMEGCSKYCTFCVVPYTRGEEVSRPVDDVLLEIAQLAEQSVREVNLLGQNVNAYRGDTHDGEICYFSDLIRLIAAIDGIDRIRYTTSHPVEFTQDIVDVYADVPELVDHLHLPVQSGSDRILNLMKRGHTAIEYKSTIRKLRKIRPNLSMSSDFIIGFPGETQDDFEATMKLISDVGFDMSFSFIYSARPGTPAADLPDDVTEQEKKERLYLLQNRITQMAQQISRQMFDTEQRILVEGPSKKNPMELRGRTENNRVVNFVGPHTVIGQFVDVRITEALPNSLRGDLIRTESEMNLRREIAPSAILTKAASLEPKPDTINEIGVATFVP</sequence>
<gene>
    <name evidence="1" type="primary">miaB</name>
    <name type="ordered locus">PSHAa1046</name>
</gene>
<reference key="1">
    <citation type="journal article" date="2005" name="Genome Res.">
        <title>Coping with cold: the genome of the versatile marine Antarctica bacterium Pseudoalteromonas haloplanktis TAC125.</title>
        <authorList>
            <person name="Medigue C."/>
            <person name="Krin E."/>
            <person name="Pascal G."/>
            <person name="Barbe V."/>
            <person name="Bernsel A."/>
            <person name="Bertin P.N."/>
            <person name="Cheung F."/>
            <person name="Cruveiller S."/>
            <person name="D'Amico S."/>
            <person name="Duilio A."/>
            <person name="Fang G."/>
            <person name="Feller G."/>
            <person name="Ho C."/>
            <person name="Mangenot S."/>
            <person name="Marino G."/>
            <person name="Nilsson J."/>
            <person name="Parrilli E."/>
            <person name="Rocha E.P.C."/>
            <person name="Rouy Z."/>
            <person name="Sekowska A."/>
            <person name="Tutino M.L."/>
            <person name="Vallenet D."/>
            <person name="von Heijne G."/>
            <person name="Danchin A."/>
        </authorList>
    </citation>
    <scope>NUCLEOTIDE SEQUENCE [LARGE SCALE GENOMIC DNA]</scope>
    <source>
        <strain>TAC 125</strain>
    </source>
</reference>
<evidence type="ECO:0000255" key="1">
    <source>
        <dbReference type="HAMAP-Rule" id="MF_01864"/>
    </source>
</evidence>
<evidence type="ECO:0000255" key="2">
    <source>
        <dbReference type="PROSITE-ProRule" id="PRU01266"/>
    </source>
</evidence>
<evidence type="ECO:0000305" key="3"/>
<protein>
    <recommendedName>
        <fullName evidence="1">tRNA-2-methylthio-N(6)-dimethylallyladenosine synthase</fullName>
        <ecNumber evidence="1">2.8.4.3</ecNumber>
    </recommendedName>
    <alternativeName>
        <fullName evidence="1">(Dimethylallyl)adenosine tRNA methylthiotransferase MiaB</fullName>
    </alternativeName>
    <alternativeName>
        <fullName evidence="1">tRNA-i(6)A37 methylthiotransferase</fullName>
    </alternativeName>
</protein>
<organism>
    <name type="scientific">Pseudoalteromonas translucida (strain TAC 125)</name>
    <dbReference type="NCBI Taxonomy" id="326442"/>
    <lineage>
        <taxon>Bacteria</taxon>
        <taxon>Pseudomonadati</taxon>
        <taxon>Pseudomonadota</taxon>
        <taxon>Gammaproteobacteria</taxon>
        <taxon>Alteromonadales</taxon>
        <taxon>Pseudoalteromonadaceae</taxon>
        <taxon>Pseudoalteromonas</taxon>
    </lineage>
</organism>
<feature type="chain" id="PRO_0000374461" description="tRNA-2-methylthio-N(6)-dimethylallyladenosine synthase">
    <location>
        <begin position="1"/>
        <end position="482"/>
    </location>
</feature>
<feature type="domain" description="MTTase N-terminal" evidence="1">
    <location>
        <begin position="3"/>
        <end position="120"/>
    </location>
</feature>
<feature type="domain" description="Radical SAM core" evidence="2">
    <location>
        <begin position="144"/>
        <end position="376"/>
    </location>
</feature>
<feature type="domain" description="TRAM" evidence="1">
    <location>
        <begin position="379"/>
        <end position="442"/>
    </location>
</feature>
<feature type="binding site" evidence="1">
    <location>
        <position position="12"/>
    </location>
    <ligand>
        <name>[4Fe-4S] cluster</name>
        <dbReference type="ChEBI" id="CHEBI:49883"/>
        <label>1</label>
    </ligand>
</feature>
<feature type="binding site" evidence="1">
    <location>
        <position position="49"/>
    </location>
    <ligand>
        <name>[4Fe-4S] cluster</name>
        <dbReference type="ChEBI" id="CHEBI:49883"/>
        <label>1</label>
    </ligand>
</feature>
<feature type="binding site" evidence="1">
    <location>
        <position position="83"/>
    </location>
    <ligand>
        <name>[4Fe-4S] cluster</name>
        <dbReference type="ChEBI" id="CHEBI:49883"/>
        <label>1</label>
    </ligand>
</feature>
<feature type="binding site" evidence="1">
    <location>
        <position position="158"/>
    </location>
    <ligand>
        <name>[4Fe-4S] cluster</name>
        <dbReference type="ChEBI" id="CHEBI:49883"/>
        <label>2</label>
        <note>4Fe-4S-S-AdoMet</note>
    </ligand>
</feature>
<feature type="binding site" evidence="1">
    <location>
        <position position="162"/>
    </location>
    <ligand>
        <name>[4Fe-4S] cluster</name>
        <dbReference type="ChEBI" id="CHEBI:49883"/>
        <label>2</label>
        <note>4Fe-4S-S-AdoMet</note>
    </ligand>
</feature>
<feature type="binding site" evidence="1">
    <location>
        <position position="165"/>
    </location>
    <ligand>
        <name>[4Fe-4S] cluster</name>
        <dbReference type="ChEBI" id="CHEBI:49883"/>
        <label>2</label>
        <note>4Fe-4S-S-AdoMet</note>
    </ligand>
</feature>
<proteinExistence type="inferred from homology"/>
<comment type="function">
    <text evidence="1">Catalyzes the methylthiolation of N6-(dimethylallyl)adenosine (i(6)A), leading to the formation of 2-methylthio-N6-(dimethylallyl)adenosine (ms(2)i(6)A) at position 37 in tRNAs that read codons beginning with uridine.</text>
</comment>
<comment type="catalytic activity">
    <reaction evidence="1">
        <text>N(6)-dimethylallyladenosine(37) in tRNA + (sulfur carrier)-SH + AH2 + 2 S-adenosyl-L-methionine = 2-methylsulfanyl-N(6)-dimethylallyladenosine(37) in tRNA + (sulfur carrier)-H + 5'-deoxyadenosine + L-methionine + A + S-adenosyl-L-homocysteine + 2 H(+)</text>
        <dbReference type="Rhea" id="RHEA:37067"/>
        <dbReference type="Rhea" id="RHEA-COMP:10375"/>
        <dbReference type="Rhea" id="RHEA-COMP:10376"/>
        <dbReference type="Rhea" id="RHEA-COMP:14737"/>
        <dbReference type="Rhea" id="RHEA-COMP:14739"/>
        <dbReference type="ChEBI" id="CHEBI:13193"/>
        <dbReference type="ChEBI" id="CHEBI:15378"/>
        <dbReference type="ChEBI" id="CHEBI:17319"/>
        <dbReference type="ChEBI" id="CHEBI:17499"/>
        <dbReference type="ChEBI" id="CHEBI:29917"/>
        <dbReference type="ChEBI" id="CHEBI:57844"/>
        <dbReference type="ChEBI" id="CHEBI:57856"/>
        <dbReference type="ChEBI" id="CHEBI:59789"/>
        <dbReference type="ChEBI" id="CHEBI:64428"/>
        <dbReference type="ChEBI" id="CHEBI:74415"/>
        <dbReference type="ChEBI" id="CHEBI:74417"/>
        <dbReference type="EC" id="2.8.4.3"/>
    </reaction>
</comment>
<comment type="cofactor">
    <cofactor evidence="1">
        <name>[4Fe-4S] cluster</name>
        <dbReference type="ChEBI" id="CHEBI:49883"/>
    </cofactor>
    <text evidence="1">Binds 2 [4Fe-4S] clusters. One cluster is coordinated with 3 cysteines and an exchangeable S-adenosyl-L-methionine.</text>
</comment>
<comment type="subunit">
    <text evidence="1">Monomer.</text>
</comment>
<comment type="subcellular location">
    <subcellularLocation>
        <location evidence="1">Cytoplasm</location>
    </subcellularLocation>
</comment>
<comment type="similarity">
    <text evidence="1">Belongs to the methylthiotransferase family. MiaB subfamily.</text>
</comment>
<comment type="sequence caution" evidence="3">
    <conflict type="erroneous initiation">
        <sequence resource="EMBL-CDS" id="CAI86124"/>
    </conflict>
</comment>
<accession>Q3IK75</accession>
<name>MIAB_PSET1</name>